<proteinExistence type="inferred from homology"/>
<accession>Q898W7</accession>
<evidence type="ECO:0000255" key="1">
    <source>
        <dbReference type="HAMAP-Rule" id="MF_00086"/>
    </source>
</evidence>
<comment type="function">
    <text evidence="1">Catalyzes the formation of S-adenosylmethionine (AdoMet) from methionine and ATP. The overall synthetic reaction is composed of two sequential steps, AdoMet formation and the subsequent tripolyphosphate hydrolysis which occurs prior to release of AdoMet from the enzyme.</text>
</comment>
<comment type="catalytic activity">
    <reaction evidence="1">
        <text>L-methionine + ATP + H2O = S-adenosyl-L-methionine + phosphate + diphosphate</text>
        <dbReference type="Rhea" id="RHEA:21080"/>
        <dbReference type="ChEBI" id="CHEBI:15377"/>
        <dbReference type="ChEBI" id="CHEBI:30616"/>
        <dbReference type="ChEBI" id="CHEBI:33019"/>
        <dbReference type="ChEBI" id="CHEBI:43474"/>
        <dbReference type="ChEBI" id="CHEBI:57844"/>
        <dbReference type="ChEBI" id="CHEBI:59789"/>
        <dbReference type="EC" id="2.5.1.6"/>
    </reaction>
</comment>
<comment type="cofactor">
    <cofactor evidence="1">
        <name>Mg(2+)</name>
        <dbReference type="ChEBI" id="CHEBI:18420"/>
    </cofactor>
    <text evidence="1">Binds 2 divalent ions per subunit.</text>
</comment>
<comment type="cofactor">
    <cofactor evidence="1">
        <name>K(+)</name>
        <dbReference type="ChEBI" id="CHEBI:29103"/>
    </cofactor>
    <text evidence="1">Binds 1 potassium ion per subunit.</text>
</comment>
<comment type="pathway">
    <text evidence="1">Amino-acid biosynthesis; S-adenosyl-L-methionine biosynthesis; S-adenosyl-L-methionine from L-methionine: step 1/1.</text>
</comment>
<comment type="subunit">
    <text evidence="1">Homotetramer; dimer of dimers.</text>
</comment>
<comment type="subcellular location">
    <subcellularLocation>
        <location evidence="1">Cytoplasm</location>
    </subcellularLocation>
</comment>
<comment type="similarity">
    <text evidence="1">Belongs to the AdoMet synthase family.</text>
</comment>
<protein>
    <recommendedName>
        <fullName evidence="1">S-adenosylmethionine synthase</fullName>
        <shortName evidence="1">AdoMet synthase</shortName>
        <ecNumber evidence="1">2.5.1.6</ecNumber>
    </recommendedName>
    <alternativeName>
        <fullName evidence="1">MAT</fullName>
    </alternativeName>
    <alternativeName>
        <fullName evidence="1">Methionine adenosyltransferase</fullName>
    </alternativeName>
</protein>
<name>METK_CLOTE</name>
<organism>
    <name type="scientific">Clostridium tetani (strain Massachusetts / E88)</name>
    <dbReference type="NCBI Taxonomy" id="212717"/>
    <lineage>
        <taxon>Bacteria</taxon>
        <taxon>Bacillati</taxon>
        <taxon>Bacillota</taxon>
        <taxon>Clostridia</taxon>
        <taxon>Eubacteriales</taxon>
        <taxon>Clostridiaceae</taxon>
        <taxon>Clostridium</taxon>
    </lineage>
</organism>
<dbReference type="EC" id="2.5.1.6" evidence="1"/>
<dbReference type="EMBL" id="AE015927">
    <property type="protein sequence ID" value="AAO34962.1"/>
    <property type="molecule type" value="Genomic_DNA"/>
</dbReference>
<dbReference type="RefSeq" id="WP_011098633.1">
    <property type="nucleotide sequence ID" value="NC_004557.1"/>
</dbReference>
<dbReference type="SMR" id="Q898W7"/>
<dbReference type="STRING" id="212717.CTC_00321"/>
<dbReference type="GeneID" id="24252917"/>
<dbReference type="KEGG" id="ctc:CTC_00321"/>
<dbReference type="HOGENOM" id="CLU_041802_1_1_9"/>
<dbReference type="OrthoDB" id="9801686at2"/>
<dbReference type="UniPathway" id="UPA00315">
    <property type="reaction ID" value="UER00080"/>
</dbReference>
<dbReference type="Proteomes" id="UP000001412">
    <property type="component" value="Chromosome"/>
</dbReference>
<dbReference type="GO" id="GO:0005737">
    <property type="term" value="C:cytoplasm"/>
    <property type="evidence" value="ECO:0007669"/>
    <property type="project" value="UniProtKB-SubCell"/>
</dbReference>
<dbReference type="GO" id="GO:0005524">
    <property type="term" value="F:ATP binding"/>
    <property type="evidence" value="ECO:0007669"/>
    <property type="project" value="UniProtKB-UniRule"/>
</dbReference>
<dbReference type="GO" id="GO:0000287">
    <property type="term" value="F:magnesium ion binding"/>
    <property type="evidence" value="ECO:0007669"/>
    <property type="project" value="UniProtKB-UniRule"/>
</dbReference>
<dbReference type="GO" id="GO:0004478">
    <property type="term" value="F:methionine adenosyltransferase activity"/>
    <property type="evidence" value="ECO:0007669"/>
    <property type="project" value="UniProtKB-UniRule"/>
</dbReference>
<dbReference type="GO" id="GO:0006730">
    <property type="term" value="P:one-carbon metabolic process"/>
    <property type="evidence" value="ECO:0007669"/>
    <property type="project" value="UniProtKB-KW"/>
</dbReference>
<dbReference type="GO" id="GO:0006556">
    <property type="term" value="P:S-adenosylmethionine biosynthetic process"/>
    <property type="evidence" value="ECO:0007669"/>
    <property type="project" value="UniProtKB-UniRule"/>
</dbReference>
<dbReference type="CDD" id="cd18079">
    <property type="entry name" value="S-AdoMet_synt"/>
    <property type="match status" value="1"/>
</dbReference>
<dbReference type="FunFam" id="3.30.300.10:FF:000003">
    <property type="entry name" value="S-adenosylmethionine synthase"/>
    <property type="match status" value="1"/>
</dbReference>
<dbReference type="FunFam" id="3.30.300.10:FF:000004">
    <property type="entry name" value="S-adenosylmethionine synthase"/>
    <property type="match status" value="1"/>
</dbReference>
<dbReference type="Gene3D" id="3.30.300.10">
    <property type="match status" value="3"/>
</dbReference>
<dbReference type="HAMAP" id="MF_00086">
    <property type="entry name" value="S_AdoMet_synth1"/>
    <property type="match status" value="1"/>
</dbReference>
<dbReference type="InterPro" id="IPR022631">
    <property type="entry name" value="ADOMET_SYNTHASE_CS"/>
</dbReference>
<dbReference type="InterPro" id="IPR022630">
    <property type="entry name" value="S-AdoMet_synt_C"/>
</dbReference>
<dbReference type="InterPro" id="IPR022629">
    <property type="entry name" value="S-AdoMet_synt_central"/>
</dbReference>
<dbReference type="InterPro" id="IPR022628">
    <property type="entry name" value="S-AdoMet_synt_N"/>
</dbReference>
<dbReference type="InterPro" id="IPR002133">
    <property type="entry name" value="S-AdoMet_synthetase"/>
</dbReference>
<dbReference type="InterPro" id="IPR022636">
    <property type="entry name" value="S-AdoMet_synthetase_sfam"/>
</dbReference>
<dbReference type="NCBIfam" id="TIGR01034">
    <property type="entry name" value="metK"/>
    <property type="match status" value="1"/>
</dbReference>
<dbReference type="PANTHER" id="PTHR11964">
    <property type="entry name" value="S-ADENOSYLMETHIONINE SYNTHETASE"/>
    <property type="match status" value="1"/>
</dbReference>
<dbReference type="Pfam" id="PF02773">
    <property type="entry name" value="S-AdoMet_synt_C"/>
    <property type="match status" value="1"/>
</dbReference>
<dbReference type="Pfam" id="PF02772">
    <property type="entry name" value="S-AdoMet_synt_M"/>
    <property type="match status" value="1"/>
</dbReference>
<dbReference type="Pfam" id="PF00438">
    <property type="entry name" value="S-AdoMet_synt_N"/>
    <property type="match status" value="1"/>
</dbReference>
<dbReference type="PIRSF" id="PIRSF000497">
    <property type="entry name" value="MAT"/>
    <property type="match status" value="1"/>
</dbReference>
<dbReference type="SUPFAM" id="SSF55973">
    <property type="entry name" value="S-adenosylmethionine synthetase"/>
    <property type="match status" value="3"/>
</dbReference>
<dbReference type="PROSITE" id="PS00376">
    <property type="entry name" value="ADOMET_SYNTHASE_1"/>
    <property type="match status" value="1"/>
</dbReference>
<dbReference type="PROSITE" id="PS00377">
    <property type="entry name" value="ADOMET_SYNTHASE_2"/>
    <property type="match status" value="1"/>
</dbReference>
<reference key="1">
    <citation type="journal article" date="2003" name="Proc. Natl. Acad. Sci. U.S.A.">
        <title>The genome sequence of Clostridium tetani, the causative agent of tetanus disease.</title>
        <authorList>
            <person name="Brueggemann H."/>
            <person name="Baeumer S."/>
            <person name="Fricke W.F."/>
            <person name="Wiezer A."/>
            <person name="Liesegang H."/>
            <person name="Decker I."/>
            <person name="Herzberg C."/>
            <person name="Martinez-Arias R."/>
            <person name="Merkl R."/>
            <person name="Henne A."/>
            <person name="Gottschalk G."/>
        </authorList>
    </citation>
    <scope>NUCLEOTIDE SEQUENCE [LARGE SCALE GENOMIC DNA]</scope>
    <source>
        <strain>Massachusetts / E88</strain>
    </source>
</reference>
<sequence>MRKLFTSESVTEGHPDKICDQISDAVLDAILERDPNGRVACETSVTTGMVLVTGEITTNCYVDIPKIVRNTIEAIGYTRAKYGFDSDTCAVLTSISEQSPDIAMGVDESLESKQGGMDKEDVIGAGDQGMMFGYANNETSEYMPMAISIAHKLSRRLSEVRKNGTLPYLRPDGKTQVTVEYEDNKAIRIDTIVVSTQHGPEVTREQIEKDIFEHVISKVVPVEFLDENTNYYINPTGRFVVGGPQGDAGLTGRKIIVDTYGGYGRHGGGAFSGKDPTKVDRSAAYAARWVAKNLVAAGVADKLEVQLAYAIGIAKPVSISVETFGTGKIDDRKIVEIINKVFDLRPSAIIKELNLRRPIYKQTAAYGHFGRTDVELPWESLNKLEEIKNLI</sequence>
<feature type="chain" id="PRO_0000174510" description="S-adenosylmethionine synthase">
    <location>
        <begin position="1"/>
        <end position="391"/>
    </location>
</feature>
<feature type="region of interest" description="Flexible loop" evidence="1">
    <location>
        <begin position="98"/>
        <end position="108"/>
    </location>
</feature>
<feature type="binding site" description="in other chain" evidence="1">
    <location>
        <position position="14"/>
    </location>
    <ligand>
        <name>ATP</name>
        <dbReference type="ChEBI" id="CHEBI:30616"/>
        <note>ligand shared between two neighboring subunits</note>
    </ligand>
</feature>
<feature type="binding site" evidence="1">
    <location>
        <position position="16"/>
    </location>
    <ligand>
        <name>Mg(2+)</name>
        <dbReference type="ChEBI" id="CHEBI:18420"/>
    </ligand>
</feature>
<feature type="binding site" evidence="1">
    <location>
        <position position="42"/>
    </location>
    <ligand>
        <name>K(+)</name>
        <dbReference type="ChEBI" id="CHEBI:29103"/>
    </ligand>
</feature>
<feature type="binding site" description="in other chain" evidence="1">
    <location>
        <position position="55"/>
    </location>
    <ligand>
        <name>L-methionine</name>
        <dbReference type="ChEBI" id="CHEBI:57844"/>
        <note>ligand shared between two neighboring subunits</note>
    </ligand>
</feature>
<feature type="binding site" description="in other chain" evidence="1">
    <location>
        <position position="98"/>
    </location>
    <ligand>
        <name>L-methionine</name>
        <dbReference type="ChEBI" id="CHEBI:57844"/>
        <note>ligand shared between two neighboring subunits</note>
    </ligand>
</feature>
<feature type="binding site" description="in other chain" evidence="1">
    <location>
        <begin position="172"/>
        <end position="174"/>
    </location>
    <ligand>
        <name>ATP</name>
        <dbReference type="ChEBI" id="CHEBI:30616"/>
        <note>ligand shared between two neighboring subunits</note>
    </ligand>
</feature>
<feature type="binding site" description="in other chain" evidence="1">
    <location>
        <begin position="238"/>
        <end position="239"/>
    </location>
    <ligand>
        <name>ATP</name>
        <dbReference type="ChEBI" id="CHEBI:30616"/>
        <note>ligand shared between two neighboring subunits</note>
    </ligand>
</feature>
<feature type="binding site" evidence="1">
    <location>
        <position position="247"/>
    </location>
    <ligand>
        <name>ATP</name>
        <dbReference type="ChEBI" id="CHEBI:30616"/>
        <note>ligand shared between two neighboring subunits</note>
    </ligand>
</feature>
<feature type="binding site" evidence="1">
    <location>
        <position position="247"/>
    </location>
    <ligand>
        <name>L-methionine</name>
        <dbReference type="ChEBI" id="CHEBI:57844"/>
        <note>ligand shared between two neighboring subunits</note>
    </ligand>
</feature>
<feature type="binding site" description="in other chain" evidence="1">
    <location>
        <begin position="253"/>
        <end position="254"/>
    </location>
    <ligand>
        <name>ATP</name>
        <dbReference type="ChEBI" id="CHEBI:30616"/>
        <note>ligand shared between two neighboring subunits</note>
    </ligand>
</feature>
<feature type="binding site" evidence="1">
    <location>
        <position position="270"/>
    </location>
    <ligand>
        <name>ATP</name>
        <dbReference type="ChEBI" id="CHEBI:30616"/>
        <note>ligand shared between two neighboring subunits</note>
    </ligand>
</feature>
<feature type="binding site" evidence="1">
    <location>
        <position position="274"/>
    </location>
    <ligand>
        <name>ATP</name>
        <dbReference type="ChEBI" id="CHEBI:30616"/>
        <note>ligand shared between two neighboring subunits</note>
    </ligand>
</feature>
<feature type="binding site" description="in other chain" evidence="1">
    <location>
        <position position="278"/>
    </location>
    <ligand>
        <name>L-methionine</name>
        <dbReference type="ChEBI" id="CHEBI:57844"/>
        <note>ligand shared between two neighboring subunits</note>
    </ligand>
</feature>
<gene>
    <name evidence="1" type="primary">metK</name>
    <name type="ordered locus">CTC_00321</name>
</gene>
<keyword id="KW-0067">ATP-binding</keyword>
<keyword id="KW-0963">Cytoplasm</keyword>
<keyword id="KW-0460">Magnesium</keyword>
<keyword id="KW-0479">Metal-binding</keyword>
<keyword id="KW-0547">Nucleotide-binding</keyword>
<keyword id="KW-0554">One-carbon metabolism</keyword>
<keyword id="KW-0630">Potassium</keyword>
<keyword id="KW-1185">Reference proteome</keyword>
<keyword id="KW-0808">Transferase</keyword>